<feature type="chain" id="PRO_0000326019" description="Photosystem I assembly protein Ycf4">
    <location>
        <begin position="1"/>
        <end position="184"/>
    </location>
</feature>
<feature type="transmembrane region" description="Helical" evidence="1">
    <location>
        <begin position="22"/>
        <end position="42"/>
    </location>
</feature>
<feature type="transmembrane region" description="Helical" evidence="1">
    <location>
        <begin position="57"/>
        <end position="77"/>
    </location>
</feature>
<proteinExistence type="inferred from homology"/>
<sequence length="184" mass="21373">MSWRSESIWIEFITGSRKTSNFCWAFILFLGSLGFLLVGTSSYLGRNVISLFPSQQIIFFPQGIVMSFYGIAGLFISCYLWCTILWNVGSGYDLFDRKEGIVRIFRWGFPGKSRRIFLRFLMKDIQSIRIEVKEGVSARRVLYMEIRGQGAIPLIRTDENFTTREIEQKAAELAYFLRVPIEVF</sequence>
<name>YCF4_NASOF</name>
<evidence type="ECO:0000255" key="1">
    <source>
        <dbReference type="HAMAP-Rule" id="MF_00437"/>
    </source>
</evidence>
<geneLocation type="chloroplast"/>
<keyword id="KW-0150">Chloroplast</keyword>
<keyword id="KW-0472">Membrane</keyword>
<keyword id="KW-0602">Photosynthesis</keyword>
<keyword id="KW-0934">Plastid</keyword>
<keyword id="KW-0793">Thylakoid</keyword>
<keyword id="KW-0812">Transmembrane</keyword>
<keyword id="KW-1133">Transmembrane helix</keyword>
<protein>
    <recommendedName>
        <fullName evidence="1">Photosystem I assembly protein Ycf4</fullName>
    </recommendedName>
</protein>
<organism>
    <name type="scientific">Nasturtium officinale</name>
    <name type="common">Watercress</name>
    <name type="synonym">Rorippa nasturtium-aquaticum</name>
    <dbReference type="NCBI Taxonomy" id="65948"/>
    <lineage>
        <taxon>Eukaryota</taxon>
        <taxon>Viridiplantae</taxon>
        <taxon>Streptophyta</taxon>
        <taxon>Embryophyta</taxon>
        <taxon>Tracheophyta</taxon>
        <taxon>Spermatophyta</taxon>
        <taxon>Magnoliopsida</taxon>
        <taxon>eudicotyledons</taxon>
        <taxon>Gunneridae</taxon>
        <taxon>Pentapetalae</taxon>
        <taxon>rosids</taxon>
        <taxon>malvids</taxon>
        <taxon>Brassicales</taxon>
        <taxon>Brassicaceae</taxon>
        <taxon>Cardamineae</taxon>
        <taxon>Nasturtium</taxon>
    </lineage>
</organism>
<dbReference type="EMBL" id="AP009376">
    <property type="protein sequence ID" value="BAF50649.1"/>
    <property type="molecule type" value="Genomic_DNA"/>
</dbReference>
<dbReference type="RefSeq" id="YP_001123825.1">
    <property type="nucleotide sequence ID" value="NC_009275.1"/>
</dbReference>
<dbReference type="GeneID" id="4962204"/>
<dbReference type="GO" id="GO:0009535">
    <property type="term" value="C:chloroplast thylakoid membrane"/>
    <property type="evidence" value="ECO:0007669"/>
    <property type="project" value="UniProtKB-SubCell"/>
</dbReference>
<dbReference type="GO" id="GO:0009522">
    <property type="term" value="C:photosystem I"/>
    <property type="evidence" value="ECO:0007669"/>
    <property type="project" value="InterPro"/>
</dbReference>
<dbReference type="GO" id="GO:0015979">
    <property type="term" value="P:photosynthesis"/>
    <property type="evidence" value="ECO:0007669"/>
    <property type="project" value="UniProtKB-UniRule"/>
</dbReference>
<dbReference type="HAMAP" id="MF_00437">
    <property type="entry name" value="Ycf4"/>
    <property type="match status" value="1"/>
</dbReference>
<dbReference type="InterPro" id="IPR003359">
    <property type="entry name" value="PSI_Ycf4_assembly"/>
</dbReference>
<dbReference type="PANTHER" id="PTHR33288">
    <property type="match status" value="1"/>
</dbReference>
<dbReference type="PANTHER" id="PTHR33288:SF4">
    <property type="entry name" value="PHOTOSYSTEM I ASSEMBLY PROTEIN YCF4"/>
    <property type="match status" value="1"/>
</dbReference>
<dbReference type="Pfam" id="PF02392">
    <property type="entry name" value="Ycf4"/>
    <property type="match status" value="1"/>
</dbReference>
<gene>
    <name evidence="1" type="primary">ycf4</name>
</gene>
<comment type="function">
    <text evidence="1">Seems to be required for the assembly of the photosystem I complex.</text>
</comment>
<comment type="subcellular location">
    <subcellularLocation>
        <location evidence="1">Plastid</location>
        <location evidence="1">Chloroplast thylakoid membrane</location>
        <topology evidence="1">Multi-pass membrane protein</topology>
    </subcellularLocation>
</comment>
<comment type="similarity">
    <text evidence="1">Belongs to the Ycf4 family.</text>
</comment>
<reference key="1">
    <citation type="submission" date="2007-03" db="EMBL/GenBank/DDBJ databases">
        <title>Sequencing analysis of Nasturtium officinale chloroplast DNA.</title>
        <authorList>
            <person name="Hosouchi T."/>
            <person name="Tsuruoka H."/>
            <person name="Kotani H."/>
        </authorList>
    </citation>
    <scope>NUCLEOTIDE SEQUENCE [LARGE SCALE GENOMIC DNA]</scope>
</reference>
<accession>A4QLU4</accession>